<reference key="1">
    <citation type="journal article" date="2005" name="FEBS J.">
        <title>Unusual venom phospholipases A2 of two primitive tree vipers Trimeresurus puniceus and Trimeresurus borneensis.</title>
        <authorList>
            <person name="Wang Y.-M."/>
            <person name="Peng H.-F."/>
            <person name="Tsai I.-H."/>
        </authorList>
    </citation>
    <scope>NUCLEOTIDE SEQUENCE [MRNA]</scope>
    <scope>PROTEIN SEQUENCE OF 17-39</scope>
    <scope>FUNCTION</scope>
    <scope>SUBUNIT</scope>
    <scope>MASS SPECTROMETRY</scope>
    <source>
        <tissue>Venom</tissue>
        <tissue>Venom gland</tissue>
    </source>
</reference>
<dbReference type="EC" id="3.1.1.4"/>
<dbReference type="EMBL" id="AY355178">
    <property type="protein sequence ID" value="AAR14172.1"/>
    <property type="molecule type" value="mRNA"/>
</dbReference>
<dbReference type="SMR" id="Q2YHJ3"/>
<dbReference type="GO" id="GO:0005576">
    <property type="term" value="C:extracellular region"/>
    <property type="evidence" value="ECO:0007669"/>
    <property type="project" value="UniProtKB-SubCell"/>
</dbReference>
<dbReference type="GO" id="GO:0005509">
    <property type="term" value="F:calcium ion binding"/>
    <property type="evidence" value="ECO:0007669"/>
    <property type="project" value="InterPro"/>
</dbReference>
<dbReference type="GO" id="GO:0047498">
    <property type="term" value="F:calcium-dependent phospholipase A2 activity"/>
    <property type="evidence" value="ECO:0007669"/>
    <property type="project" value="TreeGrafter"/>
</dbReference>
<dbReference type="GO" id="GO:0005543">
    <property type="term" value="F:phospholipid binding"/>
    <property type="evidence" value="ECO:0007669"/>
    <property type="project" value="TreeGrafter"/>
</dbReference>
<dbReference type="GO" id="GO:0090729">
    <property type="term" value="F:toxin activity"/>
    <property type="evidence" value="ECO:0007669"/>
    <property type="project" value="UniProtKB-KW"/>
</dbReference>
<dbReference type="GO" id="GO:0050482">
    <property type="term" value="P:arachidonate secretion"/>
    <property type="evidence" value="ECO:0007669"/>
    <property type="project" value="InterPro"/>
</dbReference>
<dbReference type="GO" id="GO:0016042">
    <property type="term" value="P:lipid catabolic process"/>
    <property type="evidence" value="ECO:0007669"/>
    <property type="project" value="UniProtKB-KW"/>
</dbReference>
<dbReference type="GO" id="GO:0006644">
    <property type="term" value="P:phospholipid metabolic process"/>
    <property type="evidence" value="ECO:0007669"/>
    <property type="project" value="InterPro"/>
</dbReference>
<dbReference type="CDD" id="cd00125">
    <property type="entry name" value="PLA2c"/>
    <property type="match status" value="1"/>
</dbReference>
<dbReference type="FunFam" id="1.20.90.10:FF:000001">
    <property type="entry name" value="Basic phospholipase A2 homolog"/>
    <property type="match status" value="1"/>
</dbReference>
<dbReference type="Gene3D" id="1.20.90.10">
    <property type="entry name" value="Phospholipase A2 domain"/>
    <property type="match status" value="1"/>
</dbReference>
<dbReference type="InterPro" id="IPR001211">
    <property type="entry name" value="PLipase_A2"/>
</dbReference>
<dbReference type="InterPro" id="IPR033112">
    <property type="entry name" value="PLipase_A2_Asp_AS"/>
</dbReference>
<dbReference type="InterPro" id="IPR016090">
    <property type="entry name" value="PLipase_A2_dom"/>
</dbReference>
<dbReference type="InterPro" id="IPR036444">
    <property type="entry name" value="PLipase_A2_dom_sf"/>
</dbReference>
<dbReference type="InterPro" id="IPR033113">
    <property type="entry name" value="PLipase_A2_His_AS"/>
</dbReference>
<dbReference type="PANTHER" id="PTHR11716:SF101">
    <property type="entry name" value="BASIC PHOSPHOLIPASE A2 PA-11-LIKE"/>
    <property type="match status" value="1"/>
</dbReference>
<dbReference type="PANTHER" id="PTHR11716">
    <property type="entry name" value="PHOSPHOLIPASE A2 FAMILY MEMBER"/>
    <property type="match status" value="1"/>
</dbReference>
<dbReference type="Pfam" id="PF00068">
    <property type="entry name" value="Phospholip_A2_1"/>
    <property type="match status" value="1"/>
</dbReference>
<dbReference type="PRINTS" id="PR00389">
    <property type="entry name" value="PHPHLIPASEA2"/>
</dbReference>
<dbReference type="SMART" id="SM00085">
    <property type="entry name" value="PA2c"/>
    <property type="match status" value="1"/>
</dbReference>
<dbReference type="SUPFAM" id="SSF48619">
    <property type="entry name" value="Phospholipase A2, PLA2"/>
    <property type="match status" value="1"/>
</dbReference>
<dbReference type="PROSITE" id="PS00119">
    <property type="entry name" value="PA2_ASP"/>
    <property type="match status" value="1"/>
</dbReference>
<dbReference type="PROSITE" id="PS00118">
    <property type="entry name" value="PA2_HIS"/>
    <property type="match status" value="1"/>
</dbReference>
<accession>Q2YHJ3</accession>
<evidence type="ECO:0000250" key="1"/>
<evidence type="ECO:0000255" key="2">
    <source>
        <dbReference type="PROSITE-ProRule" id="PRU10035"/>
    </source>
</evidence>
<evidence type="ECO:0000255" key="3">
    <source>
        <dbReference type="PROSITE-ProRule" id="PRU10036"/>
    </source>
</evidence>
<evidence type="ECO:0000269" key="4">
    <source>
    </source>
</evidence>
<evidence type="ECO:0000305" key="5"/>
<comment type="function">
    <text evidence="4">Snake venom phospholipase A2 (PLA2) that impairs hemostasis. It weakly inhibits ADP-induced platelet aggregation when tested on platelet rich plasma from human and rabbit blood (15-25% of inhibition at 5-10 ug of enzyme), and dose-dependently inhibits blood coagulation, possibly by inhibiting thrombin activation. Exhibits high hydrolytic activities toward L-dipalmitoyl phosphatidylcholine. PLA2 catalyzes the calcium-dependent hydrolysis of the 2-acyl groups in 3-sn-phosphoglycerides.</text>
</comment>
<comment type="catalytic activity">
    <reaction evidence="2 3">
        <text>a 1,2-diacyl-sn-glycero-3-phosphocholine + H2O = a 1-acyl-sn-glycero-3-phosphocholine + a fatty acid + H(+)</text>
        <dbReference type="Rhea" id="RHEA:15801"/>
        <dbReference type="ChEBI" id="CHEBI:15377"/>
        <dbReference type="ChEBI" id="CHEBI:15378"/>
        <dbReference type="ChEBI" id="CHEBI:28868"/>
        <dbReference type="ChEBI" id="CHEBI:57643"/>
        <dbReference type="ChEBI" id="CHEBI:58168"/>
        <dbReference type="EC" id="3.1.1.4"/>
    </reaction>
</comment>
<comment type="cofactor">
    <cofactor evidence="1">
        <name>Ca(2+)</name>
        <dbReference type="ChEBI" id="CHEBI:29108"/>
    </cofactor>
    <text evidence="1">Binds 1 Ca(2+) ion.</text>
</comment>
<comment type="subunit">
    <text evidence="4">Monomer.</text>
</comment>
<comment type="subcellular location">
    <subcellularLocation>
        <location>Secreted</location>
    </subcellularLocation>
</comment>
<comment type="tissue specificity">
    <text>Expressed by the venom gland.</text>
</comment>
<comment type="mass spectrometry"/>
<comment type="similarity">
    <text evidence="5">Belongs to the phospholipase A2 family. Group II subfamily. D49 sub-subfamily.</text>
</comment>
<sequence>MRTLWILAVLLLGVKGNLLQFEMMINKMAGRSGIRWYSDYGCYCGKGGHGQPQDATDRCCFVHDCCYGKVSGCDPKMAFYKYSSDKNDIVCGGNNPCLKEICECDRAAAICFRDNLSTYDNKYWNVPSETCQVESEPC</sequence>
<proteinExistence type="evidence at protein level"/>
<name>PA2A_CRABR</name>
<protein>
    <recommendedName>
        <fullName>Acidic phospholipase A2 Tbo-E6</fullName>
        <shortName>svPLA2</shortName>
        <ecNumber>3.1.1.4</ecNumber>
    </recommendedName>
    <alternativeName>
        <fullName>Phosphatidylcholine 2-acylhydrolase</fullName>
    </alternativeName>
</protein>
<organism>
    <name type="scientific">Craspedocephalus borneensis</name>
    <name type="common">Borneo pit viper</name>
    <name type="synonym">Trimeresurus borneensis</name>
    <dbReference type="NCBI Taxonomy" id="3147914"/>
    <lineage>
        <taxon>Eukaryota</taxon>
        <taxon>Metazoa</taxon>
        <taxon>Chordata</taxon>
        <taxon>Craniata</taxon>
        <taxon>Vertebrata</taxon>
        <taxon>Euteleostomi</taxon>
        <taxon>Lepidosauria</taxon>
        <taxon>Squamata</taxon>
        <taxon>Bifurcata</taxon>
        <taxon>Unidentata</taxon>
        <taxon>Episquamata</taxon>
        <taxon>Toxicofera</taxon>
        <taxon>Serpentes</taxon>
        <taxon>Colubroidea</taxon>
        <taxon>Viperidae</taxon>
        <taxon>Crotalinae</taxon>
        <taxon>Craspedocephalus</taxon>
    </lineage>
</organism>
<feature type="signal peptide" evidence="4">
    <location>
        <begin position="1"/>
        <end position="16"/>
    </location>
</feature>
<feature type="chain" id="PRO_0000419056" description="Acidic phospholipase A2 Tbo-E6">
    <location>
        <begin position="17"/>
        <end position="138"/>
    </location>
</feature>
<feature type="active site" evidence="1">
    <location>
        <position position="63"/>
    </location>
</feature>
<feature type="active site" evidence="1">
    <location>
        <position position="105"/>
    </location>
</feature>
<feature type="binding site" evidence="1">
    <location>
        <position position="43"/>
    </location>
    <ligand>
        <name>Ca(2+)</name>
        <dbReference type="ChEBI" id="CHEBI:29108"/>
    </ligand>
</feature>
<feature type="binding site" evidence="1">
    <location>
        <position position="45"/>
    </location>
    <ligand>
        <name>Ca(2+)</name>
        <dbReference type="ChEBI" id="CHEBI:29108"/>
    </ligand>
</feature>
<feature type="binding site" evidence="1">
    <location>
        <position position="47"/>
    </location>
    <ligand>
        <name>Ca(2+)</name>
        <dbReference type="ChEBI" id="CHEBI:29108"/>
    </ligand>
</feature>
<feature type="binding site" evidence="1">
    <location>
        <position position="64"/>
    </location>
    <ligand>
        <name>Ca(2+)</name>
        <dbReference type="ChEBI" id="CHEBI:29108"/>
    </ligand>
</feature>
<feature type="disulfide bond" evidence="1">
    <location>
        <begin position="42"/>
        <end position="131"/>
    </location>
</feature>
<feature type="disulfide bond" evidence="1">
    <location>
        <begin position="44"/>
        <end position="60"/>
    </location>
</feature>
<feature type="disulfide bond" evidence="1">
    <location>
        <begin position="59"/>
        <end position="111"/>
    </location>
</feature>
<feature type="disulfide bond" evidence="1">
    <location>
        <begin position="65"/>
        <end position="138"/>
    </location>
</feature>
<feature type="disulfide bond" evidence="1">
    <location>
        <begin position="66"/>
        <end position="104"/>
    </location>
</feature>
<feature type="disulfide bond" evidence="1">
    <location>
        <begin position="73"/>
        <end position="97"/>
    </location>
</feature>
<feature type="disulfide bond" evidence="1">
    <location>
        <begin position="91"/>
        <end position="102"/>
    </location>
</feature>
<keyword id="KW-1203">Blood coagulation cascade inhibiting toxin</keyword>
<keyword id="KW-0903">Direct protein sequencing</keyword>
<keyword id="KW-1015">Disulfide bond</keyword>
<keyword id="KW-1199">Hemostasis impairing toxin</keyword>
<keyword id="KW-0378">Hydrolase</keyword>
<keyword id="KW-0442">Lipid degradation</keyword>
<keyword id="KW-0443">Lipid metabolism</keyword>
<keyword id="KW-0479">Metal-binding</keyword>
<keyword id="KW-1201">Platelet aggregation inhibiting toxin</keyword>
<keyword id="KW-0964">Secreted</keyword>
<keyword id="KW-0732">Signal</keyword>
<keyword id="KW-0800">Toxin</keyword>